<organism>
    <name type="scientific">Priestia megaterium</name>
    <name type="common">Bacillus megaterium</name>
    <dbReference type="NCBI Taxonomy" id="1404"/>
    <lineage>
        <taxon>Bacteria</taxon>
        <taxon>Bacillati</taxon>
        <taxon>Bacillota</taxon>
        <taxon>Bacilli</taxon>
        <taxon>Bacillales</taxon>
        <taxon>Bacillaceae</taxon>
        <taxon>Priestia</taxon>
    </lineage>
</organism>
<protein>
    <recommendedName>
        <fullName evidence="5">Uroporphyrinogen-III C-methyltransferase</fullName>
        <shortName>Urogen III methylase</shortName>
        <ecNumber evidence="2">2.1.1.107</ecNumber>
    </recommendedName>
    <alternativeName>
        <fullName evidence="3">S-adenosyl-L-methionine:uroporphyrinogen III methyltransferase</fullName>
        <shortName evidence="3">SUMT</shortName>
    </alternativeName>
    <alternativeName>
        <fullName>Uroporphyrinogen III methylase</fullName>
        <shortName>UROM</shortName>
    </alternativeName>
</protein>
<name>SUMT_PRIMG</name>
<accession>P29928</accession>
<keyword id="KW-0169">Cobalamin biosynthesis</keyword>
<keyword id="KW-0489">Methyltransferase</keyword>
<keyword id="KW-0627">Porphyrin biosynthesis</keyword>
<keyword id="KW-0949">S-adenosyl-L-methionine</keyword>
<keyword id="KW-0808">Transferase</keyword>
<comment type="function">
    <text evidence="2">Catalyzes the two successive C-2 and C-7 methylation reactions involved in the conversion of uroporphyrinogen III to precorrin-2 via the intermediate formation of precorrin-1. It is a step in the biosynthesis of both cobalamin (vitamin B12) and siroheme.</text>
</comment>
<comment type="catalytic activity">
    <reaction evidence="2">
        <text>uroporphyrinogen III + 2 S-adenosyl-L-methionine = precorrin-2 + 2 S-adenosyl-L-homocysteine + H(+)</text>
        <dbReference type="Rhea" id="RHEA:32459"/>
        <dbReference type="ChEBI" id="CHEBI:15378"/>
        <dbReference type="ChEBI" id="CHEBI:57308"/>
        <dbReference type="ChEBI" id="CHEBI:57856"/>
        <dbReference type="ChEBI" id="CHEBI:58827"/>
        <dbReference type="ChEBI" id="CHEBI:59789"/>
        <dbReference type="EC" id="2.1.1.107"/>
    </reaction>
    <physiologicalReaction direction="left-to-right" evidence="5">
        <dbReference type="Rhea" id="RHEA:32460"/>
    </physiologicalReaction>
</comment>
<comment type="activity regulation">
    <text evidence="2">SUMT exhibits a substrate inhibition phenomenon at uroporphyrinogen III concentrations above 0.5 uM; this property might play a regulatory role in cobalamin biosynthesis.</text>
</comment>
<comment type="pathway">
    <text evidence="5">Cofactor biosynthesis; adenosylcobalamin biosynthesis; precorrin-2 from uroporphyrinogen III: step 1/1.</text>
</comment>
<comment type="pathway">
    <text evidence="5">Porphyrin-containing compound metabolism; siroheme biosynthesis; precorrin-2 from uroporphyrinogen III: step 1/1.</text>
</comment>
<comment type="subunit">
    <text evidence="2">Monomer.</text>
</comment>
<comment type="similarity">
    <text evidence="4">Belongs to the precorrin methyltransferase family.</text>
</comment>
<sequence>MGKVYLVGAGPGDPDLITLKGLKAIQQADVILYDRLVNKDLLEYAKSDADIIYCGKLPNYHTLKQETINNFLVKFAKKGKIVTRLKGGDPFVFGRGGEEAEALVQQGISFEIVPGITSGIAAAAYAGIPVTHREYSASFAFVAGHRKDSKHDAIKWDSLAKGVDTLAIYMGVRNLPYICQQLMKHGKTSATPIALIHWGTCADQRTVTGTLGTIVDIVKEEQIENPSMIIVGEVVNFS</sequence>
<gene>
    <name evidence="3" type="primary">cobA</name>
</gene>
<dbReference type="EC" id="2.1.1.107" evidence="2"/>
<dbReference type="EMBL" id="M62881">
    <property type="protein sequence ID" value="AAA22317.1"/>
    <property type="molecule type" value="Genomic_DNA"/>
</dbReference>
<dbReference type="PIR" id="A42479">
    <property type="entry name" value="A42479"/>
</dbReference>
<dbReference type="SMR" id="P29928"/>
<dbReference type="UniPathway" id="UPA00148">
    <property type="reaction ID" value="UER00211"/>
</dbReference>
<dbReference type="UniPathway" id="UPA00262">
    <property type="reaction ID" value="UER00211"/>
</dbReference>
<dbReference type="GO" id="GO:0004851">
    <property type="term" value="F:uroporphyrin-III C-methyltransferase activity"/>
    <property type="evidence" value="ECO:0007669"/>
    <property type="project" value="UniProtKB-EC"/>
</dbReference>
<dbReference type="GO" id="GO:0009236">
    <property type="term" value="P:cobalamin biosynthetic process"/>
    <property type="evidence" value="ECO:0007669"/>
    <property type="project" value="UniProtKB-UniPathway"/>
</dbReference>
<dbReference type="GO" id="GO:0032259">
    <property type="term" value="P:methylation"/>
    <property type="evidence" value="ECO:0007669"/>
    <property type="project" value="UniProtKB-KW"/>
</dbReference>
<dbReference type="GO" id="GO:0019354">
    <property type="term" value="P:siroheme biosynthetic process"/>
    <property type="evidence" value="ECO:0007669"/>
    <property type="project" value="UniProtKB-UniPathway"/>
</dbReference>
<dbReference type="CDD" id="cd11642">
    <property type="entry name" value="SUMT"/>
    <property type="match status" value="1"/>
</dbReference>
<dbReference type="FunFam" id="3.30.950.10:FF:000001">
    <property type="entry name" value="Siroheme synthase"/>
    <property type="match status" value="1"/>
</dbReference>
<dbReference type="FunFam" id="3.40.1010.10:FF:000001">
    <property type="entry name" value="Siroheme synthase"/>
    <property type="match status" value="1"/>
</dbReference>
<dbReference type="Gene3D" id="3.40.1010.10">
    <property type="entry name" value="Cobalt-precorrin-4 Transmethylase, Domain 1"/>
    <property type="match status" value="1"/>
</dbReference>
<dbReference type="Gene3D" id="3.30.950.10">
    <property type="entry name" value="Methyltransferase, Cobalt-precorrin-4 Transmethylase, Domain 2"/>
    <property type="match status" value="1"/>
</dbReference>
<dbReference type="InterPro" id="IPR000878">
    <property type="entry name" value="4pyrrol_Mease"/>
</dbReference>
<dbReference type="InterPro" id="IPR035996">
    <property type="entry name" value="4pyrrol_Methylase_sf"/>
</dbReference>
<dbReference type="InterPro" id="IPR014777">
    <property type="entry name" value="4pyrrole_Mease_sub1"/>
</dbReference>
<dbReference type="InterPro" id="IPR014776">
    <property type="entry name" value="4pyrrole_Mease_sub2"/>
</dbReference>
<dbReference type="InterPro" id="IPR006366">
    <property type="entry name" value="CobA/CysG_C"/>
</dbReference>
<dbReference type="InterPro" id="IPR050161">
    <property type="entry name" value="Siro_Cobalamin_biosynth"/>
</dbReference>
<dbReference type="InterPro" id="IPR003043">
    <property type="entry name" value="Uropor_MeTrfase_CS"/>
</dbReference>
<dbReference type="NCBIfam" id="TIGR01469">
    <property type="entry name" value="cobA_cysG_Cterm"/>
    <property type="match status" value="1"/>
</dbReference>
<dbReference type="NCBIfam" id="NF004790">
    <property type="entry name" value="PRK06136.1"/>
    <property type="match status" value="1"/>
</dbReference>
<dbReference type="PANTHER" id="PTHR45790:SF3">
    <property type="entry name" value="S-ADENOSYL-L-METHIONINE-DEPENDENT UROPORPHYRINOGEN III METHYLTRANSFERASE, CHLOROPLASTIC"/>
    <property type="match status" value="1"/>
</dbReference>
<dbReference type="PANTHER" id="PTHR45790">
    <property type="entry name" value="SIROHEME SYNTHASE-RELATED"/>
    <property type="match status" value="1"/>
</dbReference>
<dbReference type="Pfam" id="PF00590">
    <property type="entry name" value="TP_methylase"/>
    <property type="match status" value="1"/>
</dbReference>
<dbReference type="SUPFAM" id="SSF53790">
    <property type="entry name" value="Tetrapyrrole methylase"/>
    <property type="match status" value="1"/>
</dbReference>
<dbReference type="PROSITE" id="PS00839">
    <property type="entry name" value="SUMT_1"/>
    <property type="match status" value="1"/>
</dbReference>
<dbReference type="PROSITE" id="PS00840">
    <property type="entry name" value="SUMT_2"/>
    <property type="match status" value="1"/>
</dbReference>
<proteinExistence type="evidence at protein level"/>
<evidence type="ECO:0000250" key="1">
    <source>
        <dbReference type="UniProtKB" id="P21631"/>
    </source>
</evidence>
<evidence type="ECO:0000269" key="2">
    <source>
    </source>
</evidence>
<evidence type="ECO:0000303" key="3">
    <source>
    </source>
</evidence>
<evidence type="ECO:0000305" key="4"/>
<evidence type="ECO:0000305" key="5">
    <source>
    </source>
</evidence>
<feature type="chain" id="PRO_0000150369" description="Uroporphyrinogen-III C-methyltransferase">
    <location>
        <begin position="1"/>
        <end position="238"/>
    </location>
</feature>
<feature type="binding site" evidence="1">
    <location>
        <position position="11"/>
    </location>
    <ligand>
        <name>S-adenosyl-L-homocysteine</name>
        <dbReference type="ChEBI" id="CHEBI:57856"/>
    </ligand>
</feature>
<feature type="binding site" evidence="1">
    <location>
        <begin position="87"/>
        <end position="89"/>
    </location>
    <ligand>
        <name>S-adenosyl-L-homocysteine</name>
        <dbReference type="ChEBI" id="CHEBI:57856"/>
    </ligand>
</feature>
<feature type="binding site" evidence="1">
    <location>
        <begin position="117"/>
        <end position="118"/>
    </location>
    <ligand>
        <name>S-adenosyl-L-homocysteine</name>
        <dbReference type="ChEBI" id="CHEBI:57856"/>
    </ligand>
</feature>
<feature type="binding site" evidence="1">
    <location>
        <position position="170"/>
    </location>
    <ligand>
        <name>S-adenosyl-L-homocysteine</name>
        <dbReference type="ChEBI" id="CHEBI:57856"/>
    </ligand>
</feature>
<reference key="1">
    <citation type="journal article" date="1991" name="J. Bacteriol.">
        <title>Primary structure, expression in Escherichia coli, and properties of S-adenosyl-L-methionine:uroporphyrinogen III methyltransferase from Bacillus megaterium.</title>
        <authorList>
            <person name="Robin C."/>
            <person name="Blanche F."/>
            <person name="Cauchois L."/>
            <person name="Cameron B."/>
            <person name="Couder M."/>
            <person name="Crouzet J."/>
        </authorList>
    </citation>
    <scope>NUCLEOTIDE SEQUENCE [GENOMIC DNA]</scope>
    <scope>FUNCTION</scope>
    <scope>CATALYTIC ACTIVITY</scope>
    <scope>ACTIVITY REGULATION</scope>
    <scope>PATHWAY</scope>
    <scope>SUBUNIT</scope>
    <source>
        <strain>ATCC 10778 / DSM 2894 / NCIMB 8508 / NRRL B-938</strain>
    </source>
</reference>